<feature type="chain" id="PRO_0000089577" description="Cytoplasmic filament protein A">
    <location>
        <begin position="1"/>
        <end position="21" status="greater than"/>
    </location>
</feature>
<feature type="region of interest" description="Disordered" evidence="1">
    <location>
        <begin position="1"/>
        <end position="21"/>
    </location>
</feature>
<feature type="non-terminal residue">
    <location>
        <position position="21"/>
    </location>
</feature>
<name>CFPA_TREPH</name>
<evidence type="ECO:0000256" key="1">
    <source>
        <dbReference type="SAM" id="MobiDB-lite"/>
    </source>
</evidence>
<reference key="1">
    <citation type="journal article" date="1996" name="J. Bacteriol.">
        <title>Characterization of the cytoplasmic filament protein gene (cfpA) of Treponema pallidum subsp. pallidum.</title>
        <authorList>
            <person name="You Y."/>
            <person name="Elmore S."/>
            <person name="Colton L.L."/>
            <person name="Mackenzie C."/>
            <person name="Stoops J.K."/>
            <person name="Weinstock G.M."/>
            <person name="Norris S.J."/>
        </authorList>
    </citation>
    <scope>PROTEIN SEQUENCE</scope>
    <source>
        <strain>Kazan 5</strain>
    </source>
</reference>
<organism>
    <name type="scientific">Treponema phagedenis</name>
    <dbReference type="NCBI Taxonomy" id="162"/>
    <lineage>
        <taxon>Bacteria</taxon>
        <taxon>Pseudomonadati</taxon>
        <taxon>Spirochaetota</taxon>
        <taxon>Spirochaetia</taxon>
        <taxon>Spirochaetales</taxon>
        <taxon>Treponemataceae</taxon>
        <taxon>Treponema</taxon>
    </lineage>
</organism>
<sequence>AILELPQSPNVFHPEKPSAVG</sequence>
<comment type="function">
    <text>Component of the cytoplasmic filaments that run the length of the organism just underneath the cytoplasmic membrane.</text>
</comment>
<comment type="subcellular location">
    <subcellularLocation>
        <location>Cytoplasm</location>
    </subcellularLocation>
    <text>An array of 4 to 6 filaments lie in close apposition to the inner membrane and are always localized directly underneath the corresponding group of periplasmic flagella.</text>
</comment>
<dbReference type="GO" id="GO:0005737">
    <property type="term" value="C:cytoplasm"/>
    <property type="evidence" value="ECO:0007669"/>
    <property type="project" value="UniProtKB-SubCell"/>
</dbReference>
<accession>P56738</accession>
<gene>
    <name type="primary">cfpA</name>
</gene>
<keyword id="KW-0963">Cytoplasm</keyword>
<keyword id="KW-0903">Direct protein sequencing</keyword>
<proteinExistence type="evidence at protein level"/>
<protein>
    <recommendedName>
        <fullName>Cytoplasmic filament protein A</fullName>
    </recommendedName>
</protein>